<gene>
    <name type="primary">PPE65</name>
    <name type="ordered locus">MT3723</name>
</gene>
<dbReference type="EMBL" id="AE000516">
    <property type="protein sequence ID" value="AAK48084.1"/>
    <property type="molecule type" value="Genomic_DNA"/>
</dbReference>
<dbReference type="PIR" id="F70560">
    <property type="entry name" value="F70560"/>
</dbReference>
<dbReference type="RefSeq" id="WP_003900723.1">
    <property type="nucleotide sequence ID" value="NZ_KK341227.1"/>
</dbReference>
<dbReference type="SMR" id="P9WHX2"/>
<dbReference type="KEGG" id="mtc:MT3723"/>
<dbReference type="PATRIC" id="fig|83331.31.peg.4007"/>
<dbReference type="HOGENOM" id="CLU_000243_0_0_11"/>
<dbReference type="Proteomes" id="UP000001020">
    <property type="component" value="Chromosome"/>
</dbReference>
<dbReference type="GO" id="GO:0052572">
    <property type="term" value="P:response to host immune response"/>
    <property type="evidence" value="ECO:0007669"/>
    <property type="project" value="TreeGrafter"/>
</dbReference>
<dbReference type="FunFam" id="1.20.1260.20:FF:000001">
    <property type="entry name" value="PPE family protein PPE41"/>
    <property type="match status" value="1"/>
</dbReference>
<dbReference type="Gene3D" id="1.20.1260.20">
    <property type="entry name" value="PPE superfamily"/>
    <property type="match status" value="1"/>
</dbReference>
<dbReference type="InterPro" id="IPR022171">
    <property type="entry name" value="PPE_C"/>
</dbReference>
<dbReference type="InterPro" id="IPR000030">
    <property type="entry name" value="PPE_dom"/>
</dbReference>
<dbReference type="InterPro" id="IPR038332">
    <property type="entry name" value="PPE_sf"/>
</dbReference>
<dbReference type="PANTHER" id="PTHR46766">
    <property type="entry name" value="GLUTAMINE-RICH PROTEIN 2"/>
    <property type="match status" value="1"/>
</dbReference>
<dbReference type="PANTHER" id="PTHR46766:SF1">
    <property type="entry name" value="GLUTAMINE-RICH PROTEIN 2"/>
    <property type="match status" value="1"/>
</dbReference>
<dbReference type="Pfam" id="PF00823">
    <property type="entry name" value="PPE"/>
    <property type="match status" value="1"/>
</dbReference>
<dbReference type="Pfam" id="PF12484">
    <property type="entry name" value="PPE-SVP"/>
    <property type="match status" value="1"/>
</dbReference>
<dbReference type="SUPFAM" id="SSF140459">
    <property type="entry name" value="PE/PPE dimer-like"/>
    <property type="match status" value="1"/>
</dbReference>
<evidence type="ECO:0000305" key="1"/>
<accession>P9WHX2</accession>
<accession>L0TDB9</accession>
<accession>Q6MWV5</accession>
<accession>Q7D569</accession>
<comment type="similarity">
    <text evidence="1">Belongs to the mycobacterial PPE family.</text>
</comment>
<proteinExistence type="inferred from homology"/>
<protein>
    <recommendedName>
        <fullName>Uncharacterized PPE family protein PPE65</fullName>
    </recommendedName>
</protein>
<organism>
    <name type="scientific">Mycobacterium tuberculosis (strain CDC 1551 / Oshkosh)</name>
    <dbReference type="NCBI Taxonomy" id="83331"/>
    <lineage>
        <taxon>Bacteria</taxon>
        <taxon>Bacillati</taxon>
        <taxon>Actinomycetota</taxon>
        <taxon>Actinomycetes</taxon>
        <taxon>Mycobacteriales</taxon>
        <taxon>Mycobacteriaceae</taxon>
        <taxon>Mycobacterium</taxon>
        <taxon>Mycobacterium tuberculosis complex</taxon>
    </lineage>
</organism>
<keyword id="KW-1185">Reference proteome</keyword>
<sequence>MLDFAQLPPEVNSALMYAGPGSGPMLAAAAAWEALAAELQTTASTYDALITGLADGPWQGSSAASMVAAATPQVAWLRSTAGQAEQAGSQAVAAASAYEAAFFATVPPPEIAANRALLMALLATNFLGQNTAAIAATEAQYAEMWAQDAAAMYGYAGASAAATQLSPFNPAAQTINPAGLASQAASVGQAVSGAANAQALTDIPKALFGLSGIFTNEPPWLTDLGKALGLTGHTWSSDGSGLIVGGVLGDFVQGVTGSAELDASVAMDTFGKWVSPARLMVTQFKDYFGLAHDLPKWASEGAKAAGEAAKALPAAVPAIPSAGLSGVAGAVGQAASVGGLKVPAVWTATTPAASPAVLAASNGLGAAAAAEGSTHAFGGMPLMGSGAGRAFNNFAAPRYGFKPTVIAQPPAGG</sequence>
<name>PPE65_MYCTO</name>
<feature type="chain" id="PRO_0000428107" description="Uncharacterized PPE family protein PPE65">
    <location>
        <begin position="1"/>
        <end position="413"/>
    </location>
</feature>
<reference key="1">
    <citation type="journal article" date="2002" name="J. Bacteriol.">
        <title>Whole-genome comparison of Mycobacterium tuberculosis clinical and laboratory strains.</title>
        <authorList>
            <person name="Fleischmann R.D."/>
            <person name="Alland D."/>
            <person name="Eisen J.A."/>
            <person name="Carpenter L."/>
            <person name="White O."/>
            <person name="Peterson J.D."/>
            <person name="DeBoy R.T."/>
            <person name="Dodson R.J."/>
            <person name="Gwinn M.L."/>
            <person name="Haft D.H."/>
            <person name="Hickey E.K."/>
            <person name="Kolonay J.F."/>
            <person name="Nelson W.C."/>
            <person name="Umayam L.A."/>
            <person name="Ermolaeva M.D."/>
            <person name="Salzberg S.L."/>
            <person name="Delcher A."/>
            <person name="Utterback T.R."/>
            <person name="Weidman J.F."/>
            <person name="Khouri H.M."/>
            <person name="Gill J."/>
            <person name="Mikula A."/>
            <person name="Bishai W."/>
            <person name="Jacobs W.R. Jr."/>
            <person name="Venter J.C."/>
            <person name="Fraser C.M."/>
        </authorList>
    </citation>
    <scope>NUCLEOTIDE SEQUENCE [LARGE SCALE GENOMIC DNA]</scope>
    <source>
        <strain>CDC 1551 / Oshkosh</strain>
    </source>
</reference>